<feature type="chain" id="PRO_0000087089" description="Ethanolamine utilization protein EutJ">
    <location>
        <begin position="1"/>
        <end position="279"/>
    </location>
</feature>
<keyword id="KW-0143">Chaperone</keyword>
<reference key="1">
    <citation type="journal article" date="2001" name="Nature">
        <title>Complete genome sequence of a multiple drug resistant Salmonella enterica serovar Typhi CT18.</title>
        <authorList>
            <person name="Parkhill J."/>
            <person name="Dougan G."/>
            <person name="James K.D."/>
            <person name="Thomson N.R."/>
            <person name="Pickard D."/>
            <person name="Wain J."/>
            <person name="Churcher C.M."/>
            <person name="Mungall K.L."/>
            <person name="Bentley S.D."/>
            <person name="Holden M.T.G."/>
            <person name="Sebaihia M."/>
            <person name="Baker S."/>
            <person name="Basham D."/>
            <person name="Brooks K."/>
            <person name="Chillingworth T."/>
            <person name="Connerton P."/>
            <person name="Cronin A."/>
            <person name="Davis P."/>
            <person name="Davies R.M."/>
            <person name="Dowd L."/>
            <person name="White N."/>
            <person name="Farrar J."/>
            <person name="Feltwell T."/>
            <person name="Hamlin N."/>
            <person name="Haque A."/>
            <person name="Hien T.T."/>
            <person name="Holroyd S."/>
            <person name="Jagels K."/>
            <person name="Krogh A."/>
            <person name="Larsen T.S."/>
            <person name="Leather S."/>
            <person name="Moule S."/>
            <person name="O'Gaora P."/>
            <person name="Parry C."/>
            <person name="Quail M.A."/>
            <person name="Rutherford K.M."/>
            <person name="Simmonds M."/>
            <person name="Skelton J."/>
            <person name="Stevens K."/>
            <person name="Whitehead S."/>
            <person name="Barrell B.G."/>
        </authorList>
    </citation>
    <scope>NUCLEOTIDE SEQUENCE [LARGE SCALE GENOMIC DNA]</scope>
    <source>
        <strain>CT18</strain>
    </source>
</reference>
<reference key="2">
    <citation type="journal article" date="2003" name="J. Bacteriol.">
        <title>Comparative genomics of Salmonella enterica serovar Typhi strains Ty2 and CT18.</title>
        <authorList>
            <person name="Deng W."/>
            <person name="Liou S.-R."/>
            <person name="Plunkett G. III"/>
            <person name="Mayhew G.F."/>
            <person name="Rose D.J."/>
            <person name="Burland V."/>
            <person name="Kodoyianni V."/>
            <person name="Schwartz D.C."/>
            <person name="Blattner F.R."/>
        </authorList>
    </citation>
    <scope>NUCLEOTIDE SEQUENCE [LARGE SCALE GENOMIC DNA]</scope>
    <source>
        <strain>ATCC 700931 / Ty2</strain>
    </source>
</reference>
<dbReference type="EMBL" id="AL513382">
    <property type="protein sequence ID" value="CAD07693.1"/>
    <property type="molecule type" value="Genomic_DNA"/>
</dbReference>
<dbReference type="EMBL" id="AE014613">
    <property type="protein sequence ID" value="AAO68114.1"/>
    <property type="molecule type" value="Genomic_DNA"/>
</dbReference>
<dbReference type="RefSeq" id="NP_456997.1">
    <property type="nucleotide sequence ID" value="NC_003198.1"/>
</dbReference>
<dbReference type="RefSeq" id="WP_000929675.1">
    <property type="nucleotide sequence ID" value="NZ_WSUR01000025.1"/>
</dbReference>
<dbReference type="SMR" id="P0A207"/>
<dbReference type="STRING" id="220341.gene:17586597"/>
<dbReference type="KEGG" id="stt:t0396"/>
<dbReference type="KEGG" id="sty:STY2699"/>
<dbReference type="PATRIC" id="fig|220341.7.peg.2736"/>
<dbReference type="eggNOG" id="COG4820">
    <property type="taxonomic scope" value="Bacteria"/>
</dbReference>
<dbReference type="HOGENOM" id="CLU_088869_0_0_6"/>
<dbReference type="OMA" id="KPQNPMF"/>
<dbReference type="OrthoDB" id="306538at2"/>
<dbReference type="UniPathway" id="UPA00560"/>
<dbReference type="Proteomes" id="UP000000541">
    <property type="component" value="Chromosome"/>
</dbReference>
<dbReference type="Proteomes" id="UP000002670">
    <property type="component" value="Chromosome"/>
</dbReference>
<dbReference type="GO" id="GO:0046336">
    <property type="term" value="P:ethanolamine catabolic process"/>
    <property type="evidence" value="ECO:0007669"/>
    <property type="project" value="UniProtKB-UniPathway"/>
</dbReference>
<dbReference type="CDD" id="cd24047">
    <property type="entry name" value="ASKHA_NBD_EutJ"/>
    <property type="match status" value="1"/>
</dbReference>
<dbReference type="Gene3D" id="3.30.420.40">
    <property type="match status" value="2"/>
</dbReference>
<dbReference type="InterPro" id="IPR043129">
    <property type="entry name" value="ATPase_NBD"/>
</dbReference>
<dbReference type="InterPro" id="IPR013366">
    <property type="entry name" value="EutJ"/>
</dbReference>
<dbReference type="InterPro" id="IPR050696">
    <property type="entry name" value="FtsA/MreB"/>
</dbReference>
<dbReference type="NCBIfam" id="TIGR02529">
    <property type="entry name" value="EutJ"/>
    <property type="match status" value="1"/>
</dbReference>
<dbReference type="NCBIfam" id="NF011660">
    <property type="entry name" value="PRK15080.1"/>
    <property type="match status" value="1"/>
</dbReference>
<dbReference type="PANTHER" id="PTHR32432">
    <property type="entry name" value="CELL DIVISION PROTEIN FTSA-RELATED"/>
    <property type="match status" value="1"/>
</dbReference>
<dbReference type="PANTHER" id="PTHR32432:SF3">
    <property type="entry name" value="ETHANOLAMINE UTILIZATION PROTEIN EUTJ"/>
    <property type="match status" value="1"/>
</dbReference>
<dbReference type="Pfam" id="PF14450">
    <property type="entry name" value="FtsA"/>
    <property type="match status" value="1"/>
</dbReference>
<dbReference type="SUPFAM" id="SSF53067">
    <property type="entry name" value="Actin-like ATPase domain"/>
    <property type="match status" value="2"/>
</dbReference>
<name>EUTJ_SALTI</name>
<organism>
    <name type="scientific">Salmonella typhi</name>
    <dbReference type="NCBI Taxonomy" id="90370"/>
    <lineage>
        <taxon>Bacteria</taxon>
        <taxon>Pseudomonadati</taxon>
        <taxon>Pseudomonadota</taxon>
        <taxon>Gammaproteobacteria</taxon>
        <taxon>Enterobacterales</taxon>
        <taxon>Enterobacteriaceae</taxon>
        <taxon>Salmonella</taxon>
    </lineage>
</organism>
<accession>P0A207</accession>
<accession>P41794</accession>
<gene>
    <name type="primary">eutJ</name>
    <name type="ordered locus">STY2699</name>
    <name type="ordered locus">t0396</name>
</gene>
<evidence type="ECO:0000250" key="1">
    <source>
        <dbReference type="UniProtKB" id="P0A206"/>
    </source>
</evidence>
<evidence type="ECO:0000305" key="2"/>
<protein>
    <recommendedName>
        <fullName>Ethanolamine utilization protein EutJ</fullName>
    </recommendedName>
</protein>
<proteinExistence type="inferred from homology"/>
<comment type="function">
    <text evidence="1">May protect ethanolamine ammonia-lyase (EAL, eutB-eutC) from inhibition, may function in assembling the bacterial microcompartment and/or in refolding EAL, suggesting it may have chaperone activity.</text>
</comment>
<comment type="pathway">
    <text>Amine and polyamine degradation; ethanolamine degradation.</text>
</comment>
<comment type="similarity">
    <text evidence="2">Belongs to the EutJ family.</text>
</comment>
<sequence length="279" mass="30018">MAHDEQLWLTPRLQKAAALCNQTPAASDTPLWLGVDLGTCDVVSMVVDGNAQPVAVCLDWADVVRDGIVWDFFGAVTLVRRHLDTLEQQLGCRFTHAATSFPPGTDPRISINVLESAGLEVSHVLDEPTAVADLLALDNAGVVDIGGGTTGIAIVKQGKVTYSADEATGGHHISLTLAGNRRIPLEEAEQYKRSNAQEIWPVVKPVYEKMAEIVARHIEGQGIADLWLAGGSCMQPGVEALFRQRFPELQVHLPQHSLFMTPLAIANSGRAKAEGLYAS</sequence>